<name>ANMK_CROS5</name>
<sequence length="383" mass="42388">MYCLGLMSGTSVDSIDAALVKITGENVDLEIELLSGINHYYPEKLRQTILEVADGKPLSMERLAELDEEIALCFVEAVNKIKQKYSTVALIGSHGQTIYHRPPFKEKLGYTLQLGRGEIIANLTGIPTVNNFRAADIAVGGQGAPLVSKIDACLLSHPQHHRCVQNLGGIGNVTYLPPKEEKNWENRIIGWDTGPGNILIDLAVNRLTHGEKTYDNNGEWAAQGNPHSQLVEQWLKQGFFQQTPPKSTGRELFGEAYLEQCWQDAQVYNLSETDFLATLTELTAASIAHSYQQFLKDPIDEILLCGGGSHNLYLKERIQSHFPSTTTVKTTDEVGMNSDFKEAIAFAILAYWRYVSKIPGNLPQVTGAKQARLLGDIHLPLNS</sequence>
<gene>
    <name evidence="1" type="primary">anmK</name>
    <name type="ordered locus">cce_2824</name>
</gene>
<comment type="function">
    <text evidence="1">Catalyzes the specific phosphorylation of 1,6-anhydro-N-acetylmuramic acid (anhMurNAc) with the simultaneous cleavage of the 1,6-anhydro ring, generating MurNAc-6-P. Is required for the utilization of anhMurNAc either imported from the medium or derived from its own cell wall murein, and thus plays a role in cell wall recycling.</text>
</comment>
<comment type="catalytic activity">
    <reaction evidence="1">
        <text>1,6-anhydro-N-acetyl-beta-muramate + ATP + H2O = N-acetyl-D-muramate 6-phosphate + ADP + H(+)</text>
        <dbReference type="Rhea" id="RHEA:24952"/>
        <dbReference type="ChEBI" id="CHEBI:15377"/>
        <dbReference type="ChEBI" id="CHEBI:15378"/>
        <dbReference type="ChEBI" id="CHEBI:30616"/>
        <dbReference type="ChEBI" id="CHEBI:58690"/>
        <dbReference type="ChEBI" id="CHEBI:58722"/>
        <dbReference type="ChEBI" id="CHEBI:456216"/>
        <dbReference type="EC" id="2.7.1.170"/>
    </reaction>
</comment>
<comment type="pathway">
    <text evidence="1">Amino-sugar metabolism; 1,6-anhydro-N-acetylmuramate degradation.</text>
</comment>
<comment type="pathway">
    <text evidence="1">Cell wall biogenesis; peptidoglycan recycling.</text>
</comment>
<comment type="similarity">
    <text evidence="1">Belongs to the anhydro-N-acetylmuramic acid kinase family.</text>
</comment>
<keyword id="KW-0067">ATP-binding</keyword>
<keyword id="KW-0119">Carbohydrate metabolism</keyword>
<keyword id="KW-0418">Kinase</keyword>
<keyword id="KW-0547">Nucleotide-binding</keyword>
<keyword id="KW-1185">Reference proteome</keyword>
<keyword id="KW-0808">Transferase</keyword>
<evidence type="ECO:0000255" key="1">
    <source>
        <dbReference type="HAMAP-Rule" id="MF_01270"/>
    </source>
</evidence>
<feature type="chain" id="PRO_1000214162" description="Anhydro-N-acetylmuramic acid kinase">
    <location>
        <begin position="1"/>
        <end position="383"/>
    </location>
</feature>
<feature type="binding site" evidence="1">
    <location>
        <begin position="9"/>
        <end position="16"/>
    </location>
    <ligand>
        <name>ATP</name>
        <dbReference type="ChEBI" id="CHEBI:30616"/>
    </ligand>
</feature>
<dbReference type="EC" id="2.7.1.170" evidence="1"/>
<dbReference type="EMBL" id="CP000806">
    <property type="protein sequence ID" value="ACB52172.1"/>
    <property type="molecule type" value="Genomic_DNA"/>
</dbReference>
<dbReference type="RefSeq" id="WP_009544496.1">
    <property type="nucleotide sequence ID" value="NC_010546.1"/>
</dbReference>
<dbReference type="SMR" id="B1WUB0"/>
<dbReference type="STRING" id="43989.cce_2824"/>
<dbReference type="KEGG" id="cyt:cce_2824"/>
<dbReference type="eggNOG" id="COG2377">
    <property type="taxonomic scope" value="Bacteria"/>
</dbReference>
<dbReference type="HOGENOM" id="CLU_038782_1_0_3"/>
<dbReference type="OrthoDB" id="9763949at2"/>
<dbReference type="UniPathway" id="UPA00343"/>
<dbReference type="UniPathway" id="UPA00544"/>
<dbReference type="Proteomes" id="UP000001203">
    <property type="component" value="Chromosome circular"/>
</dbReference>
<dbReference type="GO" id="GO:0005524">
    <property type="term" value="F:ATP binding"/>
    <property type="evidence" value="ECO:0007669"/>
    <property type="project" value="UniProtKB-UniRule"/>
</dbReference>
<dbReference type="GO" id="GO:0016301">
    <property type="term" value="F:kinase activity"/>
    <property type="evidence" value="ECO:0007669"/>
    <property type="project" value="UniProtKB-KW"/>
</dbReference>
<dbReference type="GO" id="GO:0016773">
    <property type="term" value="F:phosphotransferase activity, alcohol group as acceptor"/>
    <property type="evidence" value="ECO:0007669"/>
    <property type="project" value="UniProtKB-UniRule"/>
</dbReference>
<dbReference type="GO" id="GO:0097175">
    <property type="term" value="P:1,6-anhydro-N-acetyl-beta-muramic acid catabolic process"/>
    <property type="evidence" value="ECO:0007669"/>
    <property type="project" value="UniProtKB-UniRule"/>
</dbReference>
<dbReference type="GO" id="GO:0006040">
    <property type="term" value="P:amino sugar metabolic process"/>
    <property type="evidence" value="ECO:0007669"/>
    <property type="project" value="InterPro"/>
</dbReference>
<dbReference type="GO" id="GO:0009254">
    <property type="term" value="P:peptidoglycan turnover"/>
    <property type="evidence" value="ECO:0007669"/>
    <property type="project" value="UniProtKB-UniRule"/>
</dbReference>
<dbReference type="CDD" id="cd24050">
    <property type="entry name" value="ASKHA_NBD_ANMK"/>
    <property type="match status" value="1"/>
</dbReference>
<dbReference type="Gene3D" id="3.30.420.40">
    <property type="match status" value="2"/>
</dbReference>
<dbReference type="HAMAP" id="MF_01270">
    <property type="entry name" value="AnhMurNAc_kinase"/>
    <property type="match status" value="1"/>
</dbReference>
<dbReference type="InterPro" id="IPR005338">
    <property type="entry name" value="Anhydro_N_Ac-Mur_kinase"/>
</dbReference>
<dbReference type="InterPro" id="IPR043129">
    <property type="entry name" value="ATPase_NBD"/>
</dbReference>
<dbReference type="NCBIfam" id="NF007139">
    <property type="entry name" value="PRK09585.1-3"/>
    <property type="match status" value="1"/>
</dbReference>
<dbReference type="NCBIfam" id="NF007143">
    <property type="entry name" value="PRK09585.2-2"/>
    <property type="match status" value="1"/>
</dbReference>
<dbReference type="NCBIfam" id="NF007148">
    <property type="entry name" value="PRK09585.3-2"/>
    <property type="match status" value="1"/>
</dbReference>
<dbReference type="PANTHER" id="PTHR30605">
    <property type="entry name" value="ANHYDRO-N-ACETYLMURAMIC ACID KINASE"/>
    <property type="match status" value="1"/>
</dbReference>
<dbReference type="PANTHER" id="PTHR30605:SF0">
    <property type="entry name" value="ANHYDRO-N-ACETYLMURAMIC ACID KINASE"/>
    <property type="match status" value="1"/>
</dbReference>
<dbReference type="Pfam" id="PF03702">
    <property type="entry name" value="AnmK"/>
    <property type="match status" value="1"/>
</dbReference>
<dbReference type="SUPFAM" id="SSF53067">
    <property type="entry name" value="Actin-like ATPase domain"/>
    <property type="match status" value="1"/>
</dbReference>
<accession>B1WUB0</accession>
<reference key="1">
    <citation type="journal article" date="2008" name="Proc. Natl. Acad. Sci. U.S.A.">
        <title>The genome of Cyanothece 51142, a unicellular diazotrophic cyanobacterium important in the marine nitrogen cycle.</title>
        <authorList>
            <person name="Welsh E.A."/>
            <person name="Liberton M."/>
            <person name="Stoeckel J."/>
            <person name="Loh T."/>
            <person name="Elvitigala T."/>
            <person name="Wang C."/>
            <person name="Wollam A."/>
            <person name="Fulton R.S."/>
            <person name="Clifton S.W."/>
            <person name="Jacobs J.M."/>
            <person name="Aurora R."/>
            <person name="Ghosh B.K."/>
            <person name="Sherman L.A."/>
            <person name="Smith R.D."/>
            <person name="Wilson R.K."/>
            <person name="Pakrasi H.B."/>
        </authorList>
    </citation>
    <scope>NUCLEOTIDE SEQUENCE [LARGE SCALE GENOMIC DNA]</scope>
    <source>
        <strain>ATCC 51142 / BH68</strain>
    </source>
</reference>
<protein>
    <recommendedName>
        <fullName evidence="1">Anhydro-N-acetylmuramic acid kinase</fullName>
        <ecNumber evidence="1">2.7.1.170</ecNumber>
    </recommendedName>
    <alternativeName>
        <fullName evidence="1">AnhMurNAc kinase</fullName>
    </alternativeName>
</protein>
<proteinExistence type="inferred from homology"/>
<organism>
    <name type="scientific">Crocosphaera subtropica (strain ATCC 51142 / BH68)</name>
    <name type="common">Cyanothece sp. (strain ATCC 51142)</name>
    <dbReference type="NCBI Taxonomy" id="43989"/>
    <lineage>
        <taxon>Bacteria</taxon>
        <taxon>Bacillati</taxon>
        <taxon>Cyanobacteriota</taxon>
        <taxon>Cyanophyceae</taxon>
        <taxon>Oscillatoriophycideae</taxon>
        <taxon>Chroococcales</taxon>
        <taxon>Aphanothecaceae</taxon>
        <taxon>Crocosphaera</taxon>
        <taxon>Crocosphaera subtropica</taxon>
    </lineage>
</organism>